<feature type="chain" id="PRO_0000340584" description="Bifunctional protein FolD">
    <location>
        <begin position="1"/>
        <end position="284"/>
    </location>
</feature>
<feature type="binding site" evidence="1">
    <location>
        <begin position="166"/>
        <end position="168"/>
    </location>
    <ligand>
        <name>NADP(+)</name>
        <dbReference type="ChEBI" id="CHEBI:58349"/>
    </ligand>
</feature>
<feature type="binding site" evidence="1">
    <location>
        <position position="191"/>
    </location>
    <ligand>
        <name>NADP(+)</name>
        <dbReference type="ChEBI" id="CHEBI:58349"/>
    </ligand>
</feature>
<feature type="binding site" evidence="1">
    <location>
        <position position="232"/>
    </location>
    <ligand>
        <name>NADP(+)</name>
        <dbReference type="ChEBI" id="CHEBI:58349"/>
    </ligand>
</feature>
<protein>
    <recommendedName>
        <fullName evidence="1">Bifunctional protein FolD</fullName>
    </recommendedName>
    <domain>
        <recommendedName>
            <fullName evidence="1">Methylenetetrahydrofolate dehydrogenase</fullName>
            <ecNumber evidence="1">1.5.1.5</ecNumber>
        </recommendedName>
    </domain>
    <domain>
        <recommendedName>
            <fullName evidence="1">Methenyltetrahydrofolate cyclohydrolase</fullName>
            <ecNumber evidence="1">3.5.4.9</ecNumber>
        </recommendedName>
    </domain>
</protein>
<gene>
    <name evidence="1" type="primary">folD</name>
    <name type="ordered locus">NMCC_0107</name>
</gene>
<evidence type="ECO:0000255" key="1">
    <source>
        <dbReference type="HAMAP-Rule" id="MF_01576"/>
    </source>
</evidence>
<evidence type="ECO:0000305" key="2"/>
<sequence>MSAQLINGKEVSQKRLQAVAEAVAQRQQDNLHMPCLAVVLVGGDPASAVYVRNKKTACQKCGIKSLSYELPESTSQEELLALVDRLNADSEVDGILVQLPLPKHLDSQAVLERISPDKDVDGFHPYNVGRLAVKMPLMRPCTPKGVMTLLEAYGIDPKGKKAVVVGASNIVGRPQALELLLARATVTVCHSATENLADEVAGADILVVGVGIPNFVKGEWIKPGAVVIDVGINRLDDGSLCGDVEFETAKERAAMITPVPGGVGPMTIATLMENTLHAASLHDA</sequence>
<organism>
    <name type="scientific">Neisseria meningitidis serogroup C (strain 053442)</name>
    <dbReference type="NCBI Taxonomy" id="374833"/>
    <lineage>
        <taxon>Bacteria</taxon>
        <taxon>Pseudomonadati</taxon>
        <taxon>Pseudomonadota</taxon>
        <taxon>Betaproteobacteria</taxon>
        <taxon>Neisseriales</taxon>
        <taxon>Neisseriaceae</taxon>
        <taxon>Neisseria</taxon>
    </lineage>
</organism>
<proteinExistence type="inferred from homology"/>
<name>FOLD_NEIM0</name>
<reference key="1">
    <citation type="journal article" date="2008" name="Genomics">
        <title>Characterization of ST-4821 complex, a unique Neisseria meningitidis clone.</title>
        <authorList>
            <person name="Peng J."/>
            <person name="Yang L."/>
            <person name="Yang F."/>
            <person name="Yang J."/>
            <person name="Yan Y."/>
            <person name="Nie H."/>
            <person name="Zhang X."/>
            <person name="Xiong Z."/>
            <person name="Jiang Y."/>
            <person name="Cheng F."/>
            <person name="Xu X."/>
            <person name="Chen S."/>
            <person name="Sun L."/>
            <person name="Li W."/>
            <person name="Shen Y."/>
            <person name="Shao Z."/>
            <person name="Liang X."/>
            <person name="Xu J."/>
            <person name="Jin Q."/>
        </authorList>
    </citation>
    <scope>NUCLEOTIDE SEQUENCE [LARGE SCALE GENOMIC DNA]</scope>
    <source>
        <strain>053442</strain>
    </source>
</reference>
<keyword id="KW-0028">Amino-acid biosynthesis</keyword>
<keyword id="KW-0368">Histidine biosynthesis</keyword>
<keyword id="KW-0378">Hydrolase</keyword>
<keyword id="KW-0486">Methionine biosynthesis</keyword>
<keyword id="KW-0511">Multifunctional enzyme</keyword>
<keyword id="KW-0521">NADP</keyword>
<keyword id="KW-0554">One-carbon metabolism</keyword>
<keyword id="KW-0560">Oxidoreductase</keyword>
<keyword id="KW-0658">Purine biosynthesis</keyword>
<comment type="function">
    <text evidence="1">Catalyzes the oxidation of 5,10-methylenetetrahydrofolate to 5,10-methenyltetrahydrofolate and then the hydrolysis of 5,10-methenyltetrahydrofolate to 10-formyltetrahydrofolate.</text>
</comment>
<comment type="catalytic activity">
    <reaction evidence="1">
        <text>(6R)-5,10-methylene-5,6,7,8-tetrahydrofolate + NADP(+) = (6R)-5,10-methenyltetrahydrofolate + NADPH</text>
        <dbReference type="Rhea" id="RHEA:22812"/>
        <dbReference type="ChEBI" id="CHEBI:15636"/>
        <dbReference type="ChEBI" id="CHEBI:57455"/>
        <dbReference type="ChEBI" id="CHEBI:57783"/>
        <dbReference type="ChEBI" id="CHEBI:58349"/>
        <dbReference type="EC" id="1.5.1.5"/>
    </reaction>
</comment>
<comment type="catalytic activity">
    <reaction evidence="1">
        <text>(6R)-5,10-methenyltetrahydrofolate + H2O = (6R)-10-formyltetrahydrofolate + H(+)</text>
        <dbReference type="Rhea" id="RHEA:23700"/>
        <dbReference type="ChEBI" id="CHEBI:15377"/>
        <dbReference type="ChEBI" id="CHEBI:15378"/>
        <dbReference type="ChEBI" id="CHEBI:57455"/>
        <dbReference type="ChEBI" id="CHEBI:195366"/>
        <dbReference type="EC" id="3.5.4.9"/>
    </reaction>
</comment>
<comment type="pathway">
    <text evidence="1">One-carbon metabolism; tetrahydrofolate interconversion.</text>
</comment>
<comment type="subunit">
    <text evidence="1">Homodimer.</text>
</comment>
<comment type="similarity">
    <text evidence="1">Belongs to the tetrahydrofolate dehydrogenase/cyclohydrolase family.</text>
</comment>
<comment type="sequence caution" evidence="2">
    <conflict type="erroneous initiation">
        <sequence resource="EMBL-CDS" id="ABX72329"/>
    </conflict>
</comment>
<dbReference type="EC" id="1.5.1.5" evidence="1"/>
<dbReference type="EC" id="3.5.4.9" evidence="1"/>
<dbReference type="EMBL" id="CP000381">
    <property type="protein sequence ID" value="ABX72329.1"/>
    <property type="status" value="ALT_INIT"/>
    <property type="molecule type" value="Genomic_DNA"/>
</dbReference>
<dbReference type="RefSeq" id="WP_002215043.1">
    <property type="nucleotide sequence ID" value="NC_010120.1"/>
</dbReference>
<dbReference type="SMR" id="A9M068"/>
<dbReference type="KEGG" id="nmn:NMCC_0107"/>
<dbReference type="HOGENOM" id="CLU_034045_2_1_4"/>
<dbReference type="UniPathway" id="UPA00193"/>
<dbReference type="Proteomes" id="UP000001177">
    <property type="component" value="Chromosome"/>
</dbReference>
<dbReference type="GO" id="GO:0005829">
    <property type="term" value="C:cytosol"/>
    <property type="evidence" value="ECO:0007669"/>
    <property type="project" value="TreeGrafter"/>
</dbReference>
<dbReference type="GO" id="GO:0004477">
    <property type="term" value="F:methenyltetrahydrofolate cyclohydrolase activity"/>
    <property type="evidence" value="ECO:0007669"/>
    <property type="project" value="UniProtKB-UniRule"/>
</dbReference>
<dbReference type="GO" id="GO:0004488">
    <property type="term" value="F:methylenetetrahydrofolate dehydrogenase (NADP+) activity"/>
    <property type="evidence" value="ECO:0007669"/>
    <property type="project" value="UniProtKB-UniRule"/>
</dbReference>
<dbReference type="GO" id="GO:0000105">
    <property type="term" value="P:L-histidine biosynthetic process"/>
    <property type="evidence" value="ECO:0007669"/>
    <property type="project" value="UniProtKB-KW"/>
</dbReference>
<dbReference type="GO" id="GO:0009086">
    <property type="term" value="P:methionine biosynthetic process"/>
    <property type="evidence" value="ECO:0007669"/>
    <property type="project" value="UniProtKB-KW"/>
</dbReference>
<dbReference type="GO" id="GO:0006164">
    <property type="term" value="P:purine nucleotide biosynthetic process"/>
    <property type="evidence" value="ECO:0007669"/>
    <property type="project" value="UniProtKB-KW"/>
</dbReference>
<dbReference type="GO" id="GO:0035999">
    <property type="term" value="P:tetrahydrofolate interconversion"/>
    <property type="evidence" value="ECO:0007669"/>
    <property type="project" value="UniProtKB-UniRule"/>
</dbReference>
<dbReference type="CDD" id="cd01080">
    <property type="entry name" value="NAD_bind_m-THF_DH_Cyclohyd"/>
    <property type="match status" value="1"/>
</dbReference>
<dbReference type="FunFam" id="3.40.50.10860:FF:000001">
    <property type="entry name" value="Bifunctional protein FolD"/>
    <property type="match status" value="1"/>
</dbReference>
<dbReference type="FunFam" id="3.40.50.720:FF:000006">
    <property type="entry name" value="Bifunctional protein FolD"/>
    <property type="match status" value="1"/>
</dbReference>
<dbReference type="Gene3D" id="3.40.50.10860">
    <property type="entry name" value="Leucine Dehydrogenase, chain A, domain 1"/>
    <property type="match status" value="1"/>
</dbReference>
<dbReference type="Gene3D" id="3.40.50.720">
    <property type="entry name" value="NAD(P)-binding Rossmann-like Domain"/>
    <property type="match status" value="1"/>
</dbReference>
<dbReference type="HAMAP" id="MF_01576">
    <property type="entry name" value="THF_DHG_CYH"/>
    <property type="match status" value="1"/>
</dbReference>
<dbReference type="InterPro" id="IPR046346">
    <property type="entry name" value="Aminoacid_DH-like_N_sf"/>
</dbReference>
<dbReference type="InterPro" id="IPR036291">
    <property type="entry name" value="NAD(P)-bd_dom_sf"/>
</dbReference>
<dbReference type="InterPro" id="IPR000672">
    <property type="entry name" value="THF_DH/CycHdrlase"/>
</dbReference>
<dbReference type="InterPro" id="IPR020630">
    <property type="entry name" value="THF_DH/CycHdrlase_cat_dom"/>
</dbReference>
<dbReference type="InterPro" id="IPR020867">
    <property type="entry name" value="THF_DH/CycHdrlase_CS"/>
</dbReference>
<dbReference type="InterPro" id="IPR020631">
    <property type="entry name" value="THF_DH/CycHdrlase_NAD-bd_dom"/>
</dbReference>
<dbReference type="NCBIfam" id="NF008058">
    <property type="entry name" value="PRK10792.1"/>
    <property type="match status" value="1"/>
</dbReference>
<dbReference type="NCBIfam" id="NF010783">
    <property type="entry name" value="PRK14186.1"/>
    <property type="match status" value="1"/>
</dbReference>
<dbReference type="PANTHER" id="PTHR48099:SF5">
    <property type="entry name" value="C-1-TETRAHYDROFOLATE SYNTHASE, CYTOPLASMIC"/>
    <property type="match status" value="1"/>
</dbReference>
<dbReference type="PANTHER" id="PTHR48099">
    <property type="entry name" value="C-1-TETRAHYDROFOLATE SYNTHASE, CYTOPLASMIC-RELATED"/>
    <property type="match status" value="1"/>
</dbReference>
<dbReference type="Pfam" id="PF00763">
    <property type="entry name" value="THF_DHG_CYH"/>
    <property type="match status" value="1"/>
</dbReference>
<dbReference type="Pfam" id="PF02882">
    <property type="entry name" value="THF_DHG_CYH_C"/>
    <property type="match status" value="1"/>
</dbReference>
<dbReference type="PRINTS" id="PR00085">
    <property type="entry name" value="THFDHDRGNASE"/>
</dbReference>
<dbReference type="SUPFAM" id="SSF53223">
    <property type="entry name" value="Aminoacid dehydrogenase-like, N-terminal domain"/>
    <property type="match status" value="1"/>
</dbReference>
<dbReference type="SUPFAM" id="SSF51735">
    <property type="entry name" value="NAD(P)-binding Rossmann-fold domains"/>
    <property type="match status" value="1"/>
</dbReference>
<dbReference type="PROSITE" id="PS00766">
    <property type="entry name" value="THF_DHG_CYH_1"/>
    <property type="match status" value="1"/>
</dbReference>
<dbReference type="PROSITE" id="PS00767">
    <property type="entry name" value="THF_DHG_CYH_2"/>
    <property type="match status" value="1"/>
</dbReference>
<accession>A9M068</accession>